<evidence type="ECO:0000255" key="1">
    <source>
        <dbReference type="HAMAP-Rule" id="MF_00050"/>
    </source>
</evidence>
<keyword id="KW-0963">Cytoplasm</keyword>
<keyword id="KW-0251">Elongation factor</keyword>
<keyword id="KW-0648">Protein biosynthesis</keyword>
<keyword id="KW-1185">Reference proteome</keyword>
<protein>
    <recommendedName>
        <fullName evidence="1">Elongation factor Ts</fullName>
        <shortName evidence="1">EF-Ts</shortName>
    </recommendedName>
</protein>
<sequence length="346" mass="37227">MAEITAKLVKELREKSGAGVMDAKKALVETDGDMDKAVELLREKGMAKAAKKADRVAAEGLTGVYVHGNVAAVVEVNAETDFVAKNAQFVELVNATAKVIAEGKPANNDEALALVMPSGETLAEAYVNATATIGEKISFRRFALIEKADEQHFGAYQHNGGRIGVISVVEGGDDALAKQVSMHIAAMKPTVLSYTELDAQFIKDELAQLNHAIELDNESRAMVDKPALPFLKYGSKAQLSDDVITAAEADIKAELAAEGKPEKIWDKIIPGKMDRFMLDNTKVDQAYTLLAQVYIMDDSKTVEAYLDSVNAKAIAFARFEVGEGIEKKANDFESEVAATMAAALNN</sequence>
<reference key="1">
    <citation type="journal article" date="2001" name="Proc. Natl. Acad. Sci. U.S.A.">
        <title>Complete genome sequence of an M1 strain of Streptococcus pyogenes.</title>
        <authorList>
            <person name="Ferretti J.J."/>
            <person name="McShan W.M."/>
            <person name="Ajdic D.J."/>
            <person name="Savic D.J."/>
            <person name="Savic G."/>
            <person name="Lyon K."/>
            <person name="Primeaux C."/>
            <person name="Sezate S."/>
            <person name="Suvorov A.N."/>
            <person name="Kenton S."/>
            <person name="Lai H.S."/>
            <person name="Lin S.P."/>
            <person name="Qian Y."/>
            <person name="Jia H.G."/>
            <person name="Najar F.Z."/>
            <person name="Ren Q."/>
            <person name="Zhu H."/>
            <person name="Song L."/>
            <person name="White J."/>
            <person name="Yuan X."/>
            <person name="Clifton S.W."/>
            <person name="Roe B.A."/>
            <person name="McLaughlin R.E."/>
        </authorList>
    </citation>
    <scope>NUCLEOTIDE SEQUENCE [LARGE SCALE GENOMIC DNA]</scope>
    <source>
        <strain>ATCC 700294 / SF370 / Serotype M1</strain>
    </source>
</reference>
<reference key="2">
    <citation type="journal article" date="2005" name="J. Infect. Dis.">
        <title>Evolutionary origin and emergence of a highly successful clone of serotype M1 group A Streptococcus involved multiple horizontal gene transfer events.</title>
        <authorList>
            <person name="Sumby P."/>
            <person name="Porcella S.F."/>
            <person name="Madrigal A.G."/>
            <person name="Barbian K.D."/>
            <person name="Virtaneva K."/>
            <person name="Ricklefs S.M."/>
            <person name="Sturdevant D.E."/>
            <person name="Graham M.R."/>
            <person name="Vuopio-Varkila J."/>
            <person name="Hoe N.P."/>
            <person name="Musser J.M."/>
        </authorList>
    </citation>
    <scope>NUCLEOTIDE SEQUENCE [LARGE SCALE GENOMIC DNA]</scope>
    <source>
        <strain>ATCC BAA-947 / MGAS5005 / Serotype M1</strain>
    </source>
</reference>
<feature type="chain" id="PRO_0000161210" description="Elongation factor Ts">
    <location>
        <begin position="1"/>
        <end position="346"/>
    </location>
</feature>
<feature type="region of interest" description="Involved in Mg(2+) ion dislocation from EF-Tu" evidence="1">
    <location>
        <begin position="80"/>
        <end position="83"/>
    </location>
</feature>
<organism>
    <name type="scientific">Streptococcus pyogenes serotype M1</name>
    <dbReference type="NCBI Taxonomy" id="301447"/>
    <lineage>
        <taxon>Bacteria</taxon>
        <taxon>Bacillati</taxon>
        <taxon>Bacillota</taxon>
        <taxon>Bacilli</taxon>
        <taxon>Lactobacillales</taxon>
        <taxon>Streptococcaceae</taxon>
        <taxon>Streptococcus</taxon>
    </lineage>
</organism>
<gene>
    <name evidence="1" type="primary">tsf</name>
    <name type="ordered locus">SPy_2093</name>
    <name type="ordered locus">M5005_Spy1781</name>
</gene>
<accession>Q99XQ7</accession>
<accession>Q48W76</accession>
<comment type="function">
    <text evidence="1">Associates with the EF-Tu.GDP complex and induces the exchange of GDP to GTP. It remains bound to the aminoacyl-tRNA.EF-Tu.GTP complex up to the GTP hydrolysis stage on the ribosome.</text>
</comment>
<comment type="subcellular location">
    <subcellularLocation>
        <location evidence="1">Cytoplasm</location>
    </subcellularLocation>
</comment>
<comment type="similarity">
    <text evidence="1">Belongs to the EF-Ts family.</text>
</comment>
<name>EFTS_STRP1</name>
<dbReference type="EMBL" id="AE004092">
    <property type="protein sequence ID" value="AAK34745.1"/>
    <property type="molecule type" value="Genomic_DNA"/>
</dbReference>
<dbReference type="EMBL" id="CP000017">
    <property type="protein sequence ID" value="AAZ52399.1"/>
    <property type="molecule type" value="Genomic_DNA"/>
</dbReference>
<dbReference type="RefSeq" id="NP_270024.1">
    <property type="nucleotide sequence ID" value="NC_002737.2"/>
</dbReference>
<dbReference type="SMR" id="Q99XQ7"/>
<dbReference type="PaxDb" id="1314-HKU360_01894"/>
<dbReference type="KEGG" id="spy:SPy_2093"/>
<dbReference type="KEGG" id="spz:M5005_Spy1781"/>
<dbReference type="PATRIC" id="fig|160490.10.peg.1814"/>
<dbReference type="HOGENOM" id="CLU_047155_0_1_9"/>
<dbReference type="OMA" id="DAGMMDC"/>
<dbReference type="Proteomes" id="UP000000750">
    <property type="component" value="Chromosome"/>
</dbReference>
<dbReference type="GO" id="GO:0005737">
    <property type="term" value="C:cytoplasm"/>
    <property type="evidence" value="ECO:0007669"/>
    <property type="project" value="UniProtKB-SubCell"/>
</dbReference>
<dbReference type="GO" id="GO:0003746">
    <property type="term" value="F:translation elongation factor activity"/>
    <property type="evidence" value="ECO:0007669"/>
    <property type="project" value="UniProtKB-UniRule"/>
</dbReference>
<dbReference type="CDD" id="cd14275">
    <property type="entry name" value="UBA_EF-Ts"/>
    <property type="match status" value="1"/>
</dbReference>
<dbReference type="FunFam" id="1.10.286.20:FF:000004">
    <property type="entry name" value="Elongation factor Ts"/>
    <property type="match status" value="1"/>
</dbReference>
<dbReference type="FunFam" id="1.10.8.10:FF:000001">
    <property type="entry name" value="Elongation factor Ts"/>
    <property type="match status" value="1"/>
</dbReference>
<dbReference type="FunFam" id="3.30.479.20:FF:000013">
    <property type="entry name" value="Elongation factor Ts"/>
    <property type="match status" value="1"/>
</dbReference>
<dbReference type="Gene3D" id="1.10.286.20">
    <property type="match status" value="1"/>
</dbReference>
<dbReference type="Gene3D" id="1.10.8.10">
    <property type="entry name" value="DNA helicase RuvA subunit, C-terminal domain"/>
    <property type="match status" value="1"/>
</dbReference>
<dbReference type="Gene3D" id="3.30.479.20">
    <property type="entry name" value="Elongation factor Ts, dimerisation domain"/>
    <property type="match status" value="2"/>
</dbReference>
<dbReference type="HAMAP" id="MF_00050">
    <property type="entry name" value="EF_Ts"/>
    <property type="match status" value="1"/>
</dbReference>
<dbReference type="InterPro" id="IPR036402">
    <property type="entry name" value="EF-Ts_dimer_sf"/>
</dbReference>
<dbReference type="InterPro" id="IPR001816">
    <property type="entry name" value="Transl_elong_EFTs/EF1B"/>
</dbReference>
<dbReference type="InterPro" id="IPR014039">
    <property type="entry name" value="Transl_elong_EFTs/EF1B_dimer"/>
</dbReference>
<dbReference type="InterPro" id="IPR018101">
    <property type="entry name" value="Transl_elong_Ts_CS"/>
</dbReference>
<dbReference type="InterPro" id="IPR009060">
    <property type="entry name" value="UBA-like_sf"/>
</dbReference>
<dbReference type="NCBIfam" id="TIGR00116">
    <property type="entry name" value="tsf"/>
    <property type="match status" value="1"/>
</dbReference>
<dbReference type="PANTHER" id="PTHR11741">
    <property type="entry name" value="ELONGATION FACTOR TS"/>
    <property type="match status" value="1"/>
</dbReference>
<dbReference type="PANTHER" id="PTHR11741:SF0">
    <property type="entry name" value="ELONGATION FACTOR TS, MITOCHONDRIAL"/>
    <property type="match status" value="1"/>
</dbReference>
<dbReference type="Pfam" id="PF00889">
    <property type="entry name" value="EF_TS"/>
    <property type="match status" value="1"/>
</dbReference>
<dbReference type="SUPFAM" id="SSF54713">
    <property type="entry name" value="Elongation factor Ts (EF-Ts), dimerisation domain"/>
    <property type="match status" value="1"/>
</dbReference>
<dbReference type="SUPFAM" id="SSF46934">
    <property type="entry name" value="UBA-like"/>
    <property type="match status" value="1"/>
</dbReference>
<dbReference type="PROSITE" id="PS01126">
    <property type="entry name" value="EF_TS_1"/>
    <property type="match status" value="1"/>
</dbReference>
<dbReference type="PROSITE" id="PS01127">
    <property type="entry name" value="EF_TS_2"/>
    <property type="match status" value="1"/>
</dbReference>
<proteinExistence type="inferred from homology"/>